<gene>
    <name evidence="1" type="primary">pyrB</name>
    <name type="ordered locus">PSEEN5061</name>
</gene>
<name>PYRB_PSEE4</name>
<accession>Q1I3U2</accession>
<dbReference type="EC" id="2.1.3.2" evidence="1"/>
<dbReference type="EMBL" id="CT573326">
    <property type="protein sequence ID" value="CAK17694.1"/>
    <property type="molecule type" value="Genomic_DNA"/>
</dbReference>
<dbReference type="RefSeq" id="WP_011536054.1">
    <property type="nucleotide sequence ID" value="NC_008027.1"/>
</dbReference>
<dbReference type="SMR" id="Q1I3U2"/>
<dbReference type="STRING" id="384676.PSEEN5061"/>
<dbReference type="KEGG" id="pen:PSEEN5061"/>
<dbReference type="eggNOG" id="COG0540">
    <property type="taxonomic scope" value="Bacteria"/>
</dbReference>
<dbReference type="HOGENOM" id="CLU_043846_2_0_6"/>
<dbReference type="OrthoDB" id="9774690at2"/>
<dbReference type="UniPathway" id="UPA00070">
    <property type="reaction ID" value="UER00116"/>
</dbReference>
<dbReference type="Proteomes" id="UP000000658">
    <property type="component" value="Chromosome"/>
</dbReference>
<dbReference type="GO" id="GO:0005829">
    <property type="term" value="C:cytosol"/>
    <property type="evidence" value="ECO:0007669"/>
    <property type="project" value="TreeGrafter"/>
</dbReference>
<dbReference type="GO" id="GO:0016597">
    <property type="term" value="F:amino acid binding"/>
    <property type="evidence" value="ECO:0007669"/>
    <property type="project" value="InterPro"/>
</dbReference>
<dbReference type="GO" id="GO:0004070">
    <property type="term" value="F:aspartate carbamoyltransferase activity"/>
    <property type="evidence" value="ECO:0007669"/>
    <property type="project" value="UniProtKB-UniRule"/>
</dbReference>
<dbReference type="GO" id="GO:0006207">
    <property type="term" value="P:'de novo' pyrimidine nucleobase biosynthetic process"/>
    <property type="evidence" value="ECO:0007669"/>
    <property type="project" value="InterPro"/>
</dbReference>
<dbReference type="GO" id="GO:0044205">
    <property type="term" value="P:'de novo' UMP biosynthetic process"/>
    <property type="evidence" value="ECO:0007669"/>
    <property type="project" value="UniProtKB-UniRule"/>
</dbReference>
<dbReference type="GO" id="GO:0006520">
    <property type="term" value="P:amino acid metabolic process"/>
    <property type="evidence" value="ECO:0007669"/>
    <property type="project" value="InterPro"/>
</dbReference>
<dbReference type="FunFam" id="3.40.50.1370:FF:000006">
    <property type="entry name" value="Aspartate carbamoyltransferase"/>
    <property type="match status" value="1"/>
</dbReference>
<dbReference type="FunFam" id="3.40.50.1370:FF:000007">
    <property type="entry name" value="Aspartate carbamoyltransferase"/>
    <property type="match status" value="1"/>
</dbReference>
<dbReference type="Gene3D" id="3.40.50.1370">
    <property type="entry name" value="Aspartate/ornithine carbamoyltransferase"/>
    <property type="match status" value="2"/>
</dbReference>
<dbReference type="HAMAP" id="MF_00001">
    <property type="entry name" value="Asp_carb_tr"/>
    <property type="match status" value="1"/>
</dbReference>
<dbReference type="InterPro" id="IPR006132">
    <property type="entry name" value="Asp/Orn_carbamoyltranf_P-bd"/>
</dbReference>
<dbReference type="InterPro" id="IPR006130">
    <property type="entry name" value="Asp/Orn_carbamoylTrfase"/>
</dbReference>
<dbReference type="InterPro" id="IPR036901">
    <property type="entry name" value="Asp/Orn_carbamoylTrfase_sf"/>
</dbReference>
<dbReference type="InterPro" id="IPR002082">
    <property type="entry name" value="Asp_carbamoyltransf"/>
</dbReference>
<dbReference type="InterPro" id="IPR006131">
    <property type="entry name" value="Asp_carbamoyltransf_Asp/Orn-bd"/>
</dbReference>
<dbReference type="NCBIfam" id="TIGR00670">
    <property type="entry name" value="asp_carb_tr"/>
    <property type="match status" value="1"/>
</dbReference>
<dbReference type="NCBIfam" id="NF002032">
    <property type="entry name" value="PRK00856.1"/>
    <property type="match status" value="1"/>
</dbReference>
<dbReference type="PANTHER" id="PTHR45753:SF6">
    <property type="entry name" value="ASPARTATE CARBAMOYLTRANSFERASE"/>
    <property type="match status" value="1"/>
</dbReference>
<dbReference type="PANTHER" id="PTHR45753">
    <property type="entry name" value="ORNITHINE CARBAMOYLTRANSFERASE, MITOCHONDRIAL"/>
    <property type="match status" value="1"/>
</dbReference>
<dbReference type="Pfam" id="PF00185">
    <property type="entry name" value="OTCace"/>
    <property type="match status" value="1"/>
</dbReference>
<dbReference type="Pfam" id="PF02729">
    <property type="entry name" value="OTCace_N"/>
    <property type="match status" value="1"/>
</dbReference>
<dbReference type="PRINTS" id="PR00100">
    <property type="entry name" value="AOTCASE"/>
</dbReference>
<dbReference type="PRINTS" id="PR00101">
    <property type="entry name" value="ATCASE"/>
</dbReference>
<dbReference type="SUPFAM" id="SSF53671">
    <property type="entry name" value="Aspartate/ornithine carbamoyltransferase"/>
    <property type="match status" value="1"/>
</dbReference>
<dbReference type="PROSITE" id="PS00097">
    <property type="entry name" value="CARBAMOYLTRANSFERASE"/>
    <property type="match status" value="1"/>
</dbReference>
<evidence type="ECO:0000255" key="1">
    <source>
        <dbReference type="HAMAP-Rule" id="MF_00001"/>
    </source>
</evidence>
<protein>
    <recommendedName>
        <fullName evidence="1">Aspartate carbamoyltransferase catalytic subunit</fullName>
        <ecNumber evidence="1">2.1.3.2</ecNumber>
    </recommendedName>
    <alternativeName>
        <fullName evidence="1">Aspartate transcarbamylase</fullName>
        <shortName evidence="1">ATCase</shortName>
    </alternativeName>
</protein>
<proteinExistence type="inferred from homology"/>
<comment type="function">
    <text evidence="1">Catalyzes the condensation of carbamoyl phosphate and aspartate to form carbamoyl aspartate and inorganic phosphate, the committed step in the de novo pyrimidine nucleotide biosynthesis pathway.</text>
</comment>
<comment type="catalytic activity">
    <reaction evidence="1">
        <text>carbamoyl phosphate + L-aspartate = N-carbamoyl-L-aspartate + phosphate + H(+)</text>
        <dbReference type="Rhea" id="RHEA:20013"/>
        <dbReference type="ChEBI" id="CHEBI:15378"/>
        <dbReference type="ChEBI" id="CHEBI:29991"/>
        <dbReference type="ChEBI" id="CHEBI:32814"/>
        <dbReference type="ChEBI" id="CHEBI:43474"/>
        <dbReference type="ChEBI" id="CHEBI:58228"/>
        <dbReference type="EC" id="2.1.3.2"/>
    </reaction>
</comment>
<comment type="pathway">
    <text evidence="1">Pyrimidine metabolism; UMP biosynthesis via de novo pathway; (S)-dihydroorotate from bicarbonate: step 2/3.</text>
</comment>
<comment type="subunit">
    <text evidence="1">Heterododecamer (2C3:3R2) of six catalytic PyrB chains organized as two trimers (C3), and six regulatory PyrI chains organized as three dimers (R2).</text>
</comment>
<comment type="similarity">
    <text evidence="1">Belongs to the aspartate/ornithine carbamoyltransferase superfamily. ATCase family.</text>
</comment>
<sequence length="334" mass="36398">MTPFDAKRPLQLNDQGQLRHFLSLDGLPRELLTEILDTADSFLEVGARAVKKVPLLRGKTVCNVFFENSTRTRTTFELAAQRLSADVISLNVSTSSTSKGETLFDTLRNLEAMAADMFVVRHSDSGAAHFIAEHVCPDVAVINGGDGRHAHPTQGMLDMLTIRRHKGSFENLSVAIVGDILHSRVARSDMLALKALGCPDIRVIGPKTLIPIGIEQYGVKVYTDLAEGLKDVDVVIMLRLQRERMAGGLLPSEGEFYRLFGLTTARLAGAKPDAIVMHPGPINRGVEIESAVADGKHSVILNQVTYGIAVRMAVLSMAMSGQNAQRQFDQENAQ</sequence>
<organism>
    <name type="scientific">Pseudomonas entomophila (strain L48)</name>
    <dbReference type="NCBI Taxonomy" id="384676"/>
    <lineage>
        <taxon>Bacteria</taxon>
        <taxon>Pseudomonadati</taxon>
        <taxon>Pseudomonadota</taxon>
        <taxon>Gammaproteobacteria</taxon>
        <taxon>Pseudomonadales</taxon>
        <taxon>Pseudomonadaceae</taxon>
        <taxon>Pseudomonas</taxon>
    </lineage>
</organism>
<feature type="chain" id="PRO_0000321137" description="Aspartate carbamoyltransferase catalytic subunit">
    <location>
        <begin position="1"/>
        <end position="334"/>
    </location>
</feature>
<feature type="binding site" evidence="1">
    <location>
        <position position="71"/>
    </location>
    <ligand>
        <name>carbamoyl phosphate</name>
        <dbReference type="ChEBI" id="CHEBI:58228"/>
    </ligand>
</feature>
<feature type="binding site" evidence="1">
    <location>
        <position position="72"/>
    </location>
    <ligand>
        <name>carbamoyl phosphate</name>
        <dbReference type="ChEBI" id="CHEBI:58228"/>
    </ligand>
</feature>
<feature type="binding site" evidence="1">
    <location>
        <position position="99"/>
    </location>
    <ligand>
        <name>L-aspartate</name>
        <dbReference type="ChEBI" id="CHEBI:29991"/>
    </ligand>
</feature>
<feature type="binding site" evidence="1">
    <location>
        <position position="121"/>
    </location>
    <ligand>
        <name>carbamoyl phosphate</name>
        <dbReference type="ChEBI" id="CHEBI:58228"/>
    </ligand>
</feature>
<feature type="binding site" evidence="1">
    <location>
        <position position="151"/>
    </location>
    <ligand>
        <name>carbamoyl phosphate</name>
        <dbReference type="ChEBI" id="CHEBI:58228"/>
    </ligand>
</feature>
<feature type="binding site" evidence="1">
    <location>
        <position position="154"/>
    </location>
    <ligand>
        <name>carbamoyl phosphate</name>
        <dbReference type="ChEBI" id="CHEBI:58228"/>
    </ligand>
</feature>
<feature type="binding site" evidence="1">
    <location>
        <position position="184"/>
    </location>
    <ligand>
        <name>L-aspartate</name>
        <dbReference type="ChEBI" id="CHEBI:29991"/>
    </ligand>
</feature>
<feature type="binding site" evidence="1">
    <location>
        <position position="239"/>
    </location>
    <ligand>
        <name>L-aspartate</name>
        <dbReference type="ChEBI" id="CHEBI:29991"/>
    </ligand>
</feature>
<feature type="binding site" evidence="1">
    <location>
        <position position="280"/>
    </location>
    <ligand>
        <name>carbamoyl phosphate</name>
        <dbReference type="ChEBI" id="CHEBI:58228"/>
    </ligand>
</feature>
<feature type="binding site" evidence="1">
    <location>
        <position position="281"/>
    </location>
    <ligand>
        <name>carbamoyl phosphate</name>
        <dbReference type="ChEBI" id="CHEBI:58228"/>
    </ligand>
</feature>
<reference key="1">
    <citation type="journal article" date="2006" name="Nat. Biotechnol.">
        <title>Complete genome sequence of the entomopathogenic and metabolically versatile soil bacterium Pseudomonas entomophila.</title>
        <authorList>
            <person name="Vodovar N."/>
            <person name="Vallenet D."/>
            <person name="Cruveiller S."/>
            <person name="Rouy Z."/>
            <person name="Barbe V."/>
            <person name="Acosta C."/>
            <person name="Cattolico L."/>
            <person name="Jubin C."/>
            <person name="Lajus A."/>
            <person name="Segurens B."/>
            <person name="Vacherie B."/>
            <person name="Wincker P."/>
            <person name="Weissenbach J."/>
            <person name="Lemaitre B."/>
            <person name="Medigue C."/>
            <person name="Boccard F."/>
        </authorList>
    </citation>
    <scope>NUCLEOTIDE SEQUENCE [LARGE SCALE GENOMIC DNA]</scope>
    <source>
        <strain>L48</strain>
    </source>
</reference>
<keyword id="KW-0665">Pyrimidine biosynthesis</keyword>
<keyword id="KW-0808">Transferase</keyword>